<dbReference type="EMBL" id="JQFZ01000090">
    <property type="protein sequence ID" value="KGO59708.1"/>
    <property type="molecule type" value="Genomic_DNA"/>
</dbReference>
<dbReference type="RefSeq" id="XP_016600821.1">
    <property type="nucleotide sequence ID" value="XM_016742823.1"/>
</dbReference>
<dbReference type="SMR" id="A0A0A2IBP6"/>
<dbReference type="STRING" id="27334.A0A0A2IBP6"/>
<dbReference type="GlyCosmos" id="A0A0A2IBP6">
    <property type="glycosylation" value="1 site, No reported glycans"/>
</dbReference>
<dbReference type="GeneID" id="27678242"/>
<dbReference type="VEuPathDB" id="FungiDB:PEXP_030600"/>
<dbReference type="HOGENOM" id="CLU_001265_0_1_1"/>
<dbReference type="OrthoDB" id="2962993at2759"/>
<dbReference type="PhylomeDB" id="A0A0A2IBP6"/>
<dbReference type="Proteomes" id="UP000030143">
    <property type="component" value="Unassembled WGS sequence"/>
</dbReference>
<dbReference type="GO" id="GO:0005886">
    <property type="term" value="C:plasma membrane"/>
    <property type="evidence" value="ECO:0007669"/>
    <property type="project" value="UniProtKB-SubCell"/>
</dbReference>
<dbReference type="GO" id="GO:0022857">
    <property type="term" value="F:transmembrane transporter activity"/>
    <property type="evidence" value="ECO:0007669"/>
    <property type="project" value="InterPro"/>
</dbReference>
<dbReference type="FunFam" id="1.20.1250.20:FF:000013">
    <property type="entry name" value="MFS general substrate transporter"/>
    <property type="match status" value="1"/>
</dbReference>
<dbReference type="FunFam" id="1.20.1250.20:FF:000057">
    <property type="entry name" value="MFS general substrate transporter"/>
    <property type="match status" value="1"/>
</dbReference>
<dbReference type="Gene3D" id="1.20.1250.20">
    <property type="entry name" value="MFS general substrate transporter like domains"/>
    <property type="match status" value="2"/>
</dbReference>
<dbReference type="InterPro" id="IPR011701">
    <property type="entry name" value="MFS"/>
</dbReference>
<dbReference type="InterPro" id="IPR020846">
    <property type="entry name" value="MFS_dom"/>
</dbReference>
<dbReference type="InterPro" id="IPR036259">
    <property type="entry name" value="MFS_trans_sf"/>
</dbReference>
<dbReference type="PANTHER" id="PTHR43791:SF54">
    <property type="entry name" value="MAJOR FACILITATOR SUPERFAMILY (MFS) PROFILE DOMAIN-CONTAINING PROTEIN-RELATED"/>
    <property type="match status" value="1"/>
</dbReference>
<dbReference type="PANTHER" id="PTHR43791">
    <property type="entry name" value="PERMEASE-RELATED"/>
    <property type="match status" value="1"/>
</dbReference>
<dbReference type="Pfam" id="PF07690">
    <property type="entry name" value="MFS_1"/>
    <property type="match status" value="1"/>
</dbReference>
<dbReference type="SUPFAM" id="SSF103473">
    <property type="entry name" value="MFS general substrate transporter"/>
    <property type="match status" value="1"/>
</dbReference>
<dbReference type="PROSITE" id="PS50850">
    <property type="entry name" value="MFS"/>
    <property type="match status" value="1"/>
</dbReference>
<sequence length="518" mass="56864">MESTDSSPPLSMTDTEKKGDAVTTVTDESSVSEYERFLHLENVFSGASRKKLLRKLDLRLLPTLSFLYLMCSLDKSNAGNAKLFGLLEDLGMSGTQYNLALMYFFFTYGLSEPVSNIMLRRVGPKIWFPFIVCAWGLITTLTSQASSYAGFVVIRLMLGITEAGLYPGAYFILSMWYTPKEIGTRMAIFYGANTTAGAFGGVIAYGVGSLDGNLGWRAWRWLFLIEGCITIFAGLACLFCLPAFPHQYQAGKGTKWLTDEELEYASLRVKYANGPVSSTYTFRWSDVVAAAKDRKTYFMMMLFWWGGSVPTYSLSYTLPTMVANLGYTAVKAQVMTTPPYIFATCVCVAVGYISDQTQRRYLCIMGAYTLGLIGIIILWITVHHPSIPGVSYFAIFLAAAGYSAQAPIVGAWTASNITNPSKRAAAIGLLMLLGSVGGGSIGSNIYISSEAPTYPLGFGFSVGATVLGAMIPATIHWFLMRKENKRRGGLDVAEIERKYTTEELGEMGEDSPLFRFVL</sequence>
<reference key="1">
    <citation type="journal article" date="2015" name="Mol. Plant Microbe Interact.">
        <title>Genome, transcriptome, and functional analyses of Penicillium expansum provide new insights into secondary metabolism and pathogenicity.</title>
        <authorList>
            <person name="Ballester A.R."/>
            <person name="Marcet-Houben M."/>
            <person name="Levin E."/>
            <person name="Sela N."/>
            <person name="Selma-Lazaro C."/>
            <person name="Carmona L."/>
            <person name="Wisniewski M."/>
            <person name="Droby S."/>
            <person name="Gonzalez-Candelas L."/>
            <person name="Gabaldon T."/>
        </authorList>
    </citation>
    <scope>NUCLEOTIDE SEQUENCE [LARGE SCALE GENOMIC DNA]</scope>
    <source>
        <strain>MD-8</strain>
    </source>
</reference>
<reference key="2">
    <citation type="journal article" date="2015" name="Angew. Chem. Int. Ed.">
        <title>Elucidation of the concise biosynthetic pathway of the communesin indole alkaloids.</title>
        <authorList>
            <person name="Lin H.C."/>
            <person name="Chiou G."/>
            <person name="Chooi Y.H."/>
            <person name="McMahon T.C."/>
            <person name="Xu W."/>
            <person name="Garg N.K."/>
            <person name="Tang Y."/>
        </authorList>
    </citation>
    <scope>IDENTIFICATION</scope>
    <scope>FUNCTION</scope>
</reference>
<gene>
    <name evidence="5" type="primary">cnsO</name>
    <name type="ORF">PEX2_055490</name>
</gene>
<feature type="chain" id="PRO_0000446472" description="MFS-type transporter cnsO">
    <location>
        <begin position="1"/>
        <end position="518"/>
    </location>
</feature>
<feature type="transmembrane region" description="Helical" evidence="1">
    <location>
        <begin position="99"/>
        <end position="119"/>
    </location>
</feature>
<feature type="transmembrane region" description="Helical" evidence="1">
    <location>
        <begin position="122"/>
        <end position="142"/>
    </location>
</feature>
<feature type="transmembrane region" description="Helical" evidence="1">
    <location>
        <begin position="156"/>
        <end position="176"/>
    </location>
</feature>
<feature type="transmembrane region" description="Helical" evidence="1">
    <location>
        <begin position="187"/>
        <end position="207"/>
    </location>
</feature>
<feature type="transmembrane region" description="Helical" evidence="1">
    <location>
        <begin position="221"/>
        <end position="241"/>
    </location>
</feature>
<feature type="transmembrane region" description="Helical" evidence="1">
    <location>
        <begin position="298"/>
        <end position="318"/>
    </location>
</feature>
<feature type="transmembrane region" description="Helical" evidence="1">
    <location>
        <begin position="334"/>
        <end position="354"/>
    </location>
</feature>
<feature type="transmembrane region" description="Helical" evidence="1">
    <location>
        <begin position="362"/>
        <end position="382"/>
    </location>
</feature>
<feature type="transmembrane region" description="Helical" evidence="1">
    <location>
        <begin position="392"/>
        <end position="412"/>
    </location>
</feature>
<feature type="transmembrane region" description="Helical" evidence="1">
    <location>
        <begin position="427"/>
        <end position="447"/>
    </location>
</feature>
<feature type="transmembrane region" description="Helical" evidence="1">
    <location>
        <begin position="455"/>
        <end position="475"/>
    </location>
</feature>
<feature type="region of interest" description="Disordered" evidence="3">
    <location>
        <begin position="1"/>
        <end position="24"/>
    </location>
</feature>
<feature type="compositionally biased region" description="Polar residues" evidence="3">
    <location>
        <begin position="1"/>
        <end position="13"/>
    </location>
</feature>
<feature type="glycosylation site" description="N-linked (GlcNAc...) asparagine" evidence="2">
    <location>
        <position position="416"/>
    </location>
</feature>
<protein>
    <recommendedName>
        <fullName evidence="5">MFS-type transporter cnsO</fullName>
    </recommendedName>
    <alternativeName>
        <fullName evidence="5">Communesin biosynthesis cluster protein O</fullName>
    </alternativeName>
</protein>
<comment type="function">
    <text evidence="4 7">MFS-type transporter; part of the gene cluster that mediates the biosynthesis of communesins, a prominent class of indole alkaloids with great potential as pharmaceuticals (PubMed:25571861). With the MFS transporter cnsL, is most likely responsible for cummunesins secretion and thereby may contribute to intrinsic resistance (Probable).</text>
</comment>
<comment type="subcellular location">
    <subcellularLocation>
        <location evidence="6">Cell membrane</location>
        <topology evidence="1">Multi-pass membrane protein</topology>
    </subcellularLocation>
</comment>
<comment type="similarity">
    <text evidence="6">Belongs to the major facilitator superfamily.</text>
</comment>
<proteinExistence type="inferred from homology"/>
<organism>
    <name type="scientific">Penicillium expansum</name>
    <name type="common">Blue mold rot fungus</name>
    <dbReference type="NCBI Taxonomy" id="27334"/>
    <lineage>
        <taxon>Eukaryota</taxon>
        <taxon>Fungi</taxon>
        <taxon>Dikarya</taxon>
        <taxon>Ascomycota</taxon>
        <taxon>Pezizomycotina</taxon>
        <taxon>Eurotiomycetes</taxon>
        <taxon>Eurotiomycetidae</taxon>
        <taxon>Eurotiales</taxon>
        <taxon>Aspergillaceae</taxon>
        <taxon>Penicillium</taxon>
    </lineage>
</organism>
<accession>A0A0A2IBP6</accession>
<evidence type="ECO:0000255" key="1"/>
<evidence type="ECO:0000255" key="2">
    <source>
        <dbReference type="PROSITE-ProRule" id="PRU00498"/>
    </source>
</evidence>
<evidence type="ECO:0000256" key="3">
    <source>
        <dbReference type="SAM" id="MobiDB-lite"/>
    </source>
</evidence>
<evidence type="ECO:0000269" key="4">
    <source>
    </source>
</evidence>
<evidence type="ECO:0000303" key="5">
    <source>
    </source>
</evidence>
<evidence type="ECO:0000305" key="6"/>
<evidence type="ECO:0000305" key="7">
    <source>
    </source>
</evidence>
<name>CNSO_PENEN</name>
<keyword id="KW-1003">Cell membrane</keyword>
<keyword id="KW-0325">Glycoprotein</keyword>
<keyword id="KW-0472">Membrane</keyword>
<keyword id="KW-1185">Reference proteome</keyword>
<keyword id="KW-0812">Transmembrane</keyword>
<keyword id="KW-1133">Transmembrane helix</keyword>
<keyword id="KW-0813">Transport</keyword>